<dbReference type="EC" id="4.3.1.18" evidence="1"/>
<dbReference type="EMBL" id="CP000422">
    <property type="protein sequence ID" value="ABJ68766.1"/>
    <property type="molecule type" value="Genomic_DNA"/>
</dbReference>
<dbReference type="RefSeq" id="WP_011673850.1">
    <property type="nucleotide sequence ID" value="NC_008525.1"/>
</dbReference>
<dbReference type="SMR" id="Q03DF6"/>
<dbReference type="STRING" id="278197.PEPE_1745"/>
<dbReference type="GeneID" id="33061818"/>
<dbReference type="KEGG" id="ppe:PEPE_1745"/>
<dbReference type="eggNOG" id="COG3048">
    <property type="taxonomic scope" value="Bacteria"/>
</dbReference>
<dbReference type="HOGENOM" id="CLU_035707_0_0_9"/>
<dbReference type="OrthoDB" id="9780546at2"/>
<dbReference type="Proteomes" id="UP000000773">
    <property type="component" value="Chromosome"/>
</dbReference>
<dbReference type="GO" id="GO:0008721">
    <property type="term" value="F:D-serine ammonia-lyase activity"/>
    <property type="evidence" value="ECO:0007669"/>
    <property type="project" value="UniProtKB-EC"/>
</dbReference>
<dbReference type="GO" id="GO:0016836">
    <property type="term" value="F:hydro-lyase activity"/>
    <property type="evidence" value="ECO:0007669"/>
    <property type="project" value="UniProtKB-UniRule"/>
</dbReference>
<dbReference type="GO" id="GO:0030170">
    <property type="term" value="F:pyridoxal phosphate binding"/>
    <property type="evidence" value="ECO:0007669"/>
    <property type="project" value="InterPro"/>
</dbReference>
<dbReference type="GO" id="GO:0036088">
    <property type="term" value="P:D-serine catabolic process"/>
    <property type="evidence" value="ECO:0007669"/>
    <property type="project" value="TreeGrafter"/>
</dbReference>
<dbReference type="GO" id="GO:0009097">
    <property type="term" value="P:isoleucine biosynthetic process"/>
    <property type="evidence" value="ECO:0007669"/>
    <property type="project" value="TreeGrafter"/>
</dbReference>
<dbReference type="CDD" id="cd06447">
    <property type="entry name" value="D-Ser-dehyd"/>
    <property type="match status" value="1"/>
</dbReference>
<dbReference type="Gene3D" id="3.40.50.1100">
    <property type="match status" value="2"/>
</dbReference>
<dbReference type="HAMAP" id="MF_01030">
    <property type="entry name" value="D_Ser_dehydrat"/>
    <property type="match status" value="1"/>
</dbReference>
<dbReference type="InterPro" id="IPR011780">
    <property type="entry name" value="D_Ser_am_lyase"/>
</dbReference>
<dbReference type="InterPro" id="IPR050147">
    <property type="entry name" value="Ser/Thr_Dehydratase"/>
</dbReference>
<dbReference type="InterPro" id="IPR000634">
    <property type="entry name" value="Ser/Thr_deHydtase_PyrdxlP-BS"/>
</dbReference>
<dbReference type="InterPro" id="IPR001926">
    <property type="entry name" value="TrpB-like_PALP"/>
</dbReference>
<dbReference type="InterPro" id="IPR036052">
    <property type="entry name" value="TrpB-like_PALP_sf"/>
</dbReference>
<dbReference type="NCBIfam" id="TIGR02035">
    <property type="entry name" value="D_Ser_am_lyase"/>
    <property type="match status" value="1"/>
</dbReference>
<dbReference type="NCBIfam" id="NF002823">
    <property type="entry name" value="PRK02991.1"/>
    <property type="match status" value="1"/>
</dbReference>
<dbReference type="PANTHER" id="PTHR48078:SF9">
    <property type="entry name" value="D-SERINE DEHYDRATASE"/>
    <property type="match status" value="1"/>
</dbReference>
<dbReference type="PANTHER" id="PTHR48078">
    <property type="entry name" value="THREONINE DEHYDRATASE, MITOCHONDRIAL-RELATED"/>
    <property type="match status" value="1"/>
</dbReference>
<dbReference type="Pfam" id="PF00291">
    <property type="entry name" value="PALP"/>
    <property type="match status" value="1"/>
</dbReference>
<dbReference type="SUPFAM" id="SSF53686">
    <property type="entry name" value="Tryptophan synthase beta subunit-like PLP-dependent enzymes"/>
    <property type="match status" value="1"/>
</dbReference>
<dbReference type="PROSITE" id="PS00165">
    <property type="entry name" value="DEHYDRATASE_SER_THR"/>
    <property type="match status" value="1"/>
</dbReference>
<comment type="catalytic activity">
    <reaction evidence="1">
        <text>D-serine = pyruvate + NH4(+)</text>
        <dbReference type="Rhea" id="RHEA:13977"/>
        <dbReference type="ChEBI" id="CHEBI:15361"/>
        <dbReference type="ChEBI" id="CHEBI:28938"/>
        <dbReference type="ChEBI" id="CHEBI:35247"/>
        <dbReference type="EC" id="4.3.1.18"/>
    </reaction>
</comment>
<comment type="cofactor">
    <cofactor evidence="1">
        <name>pyridoxal 5'-phosphate</name>
        <dbReference type="ChEBI" id="CHEBI:597326"/>
    </cofactor>
</comment>
<comment type="similarity">
    <text evidence="1">Belongs to the serine/threonine dehydratase family. DsdA subfamily.</text>
</comment>
<accession>Q03DF6</accession>
<protein>
    <recommendedName>
        <fullName evidence="1">Probable D-serine dehydratase</fullName>
        <ecNumber evidence="1">4.3.1.18</ecNumber>
    </recommendedName>
    <alternativeName>
        <fullName evidence="1">D-serine deaminase</fullName>
        <shortName evidence="1">DSD</shortName>
    </alternativeName>
</protein>
<name>SDHD_PEDPA</name>
<feature type="chain" id="PRO_0000291735" description="Probable D-serine dehydratase">
    <location>
        <begin position="1"/>
        <end position="432"/>
    </location>
</feature>
<feature type="modified residue" description="N6-(pyridoxal phosphate)lysine" evidence="1">
    <location>
        <position position="112"/>
    </location>
</feature>
<sequence length="432" mass="47549">MIDVDALSKKYPAIKQMQAYEPIFWKNLNYKKEAELPVGVEHIFDAEARFQRFAPYFEVAFPETLPTHGILESPLLKMDKMKAVLNAEAQNQVKGDLYLKADNYLPISGSIKSRGGIYEVLKFAEKVAMKHGEIVYGDNYAKLNEPRFKDLFGQYGIVVGSTGNLGLSIGIVACKLGFRTSVHMSSDAAQWKKDMLREKGVNVVEYNDNFTHAITEARKSAEADPMAYFIDDEGSYDLFLGYSVAAVRLQAQLKAQNIKVDAEHPLFVYLPAGVGGSPSGVAFGLKKIIGENVHPIFAEPTHIPSVSLGMMTGLNDQISVYDAGIDGVTKADGLAVGRPSRIAGKMMDTLLYGIQTFDDQKMMKNVAELHDSENVDVEPSAASGFTILDDVQAQLEQDYPMENASHIVWATGGSMVPKNDMDQYVAEGHQVK</sequence>
<proteinExistence type="inferred from homology"/>
<evidence type="ECO:0000255" key="1">
    <source>
        <dbReference type="HAMAP-Rule" id="MF_01030"/>
    </source>
</evidence>
<gene>
    <name evidence="1" type="primary">dsdA</name>
    <name type="ordered locus">PEPE_1745</name>
</gene>
<reference key="1">
    <citation type="journal article" date="2006" name="Proc. Natl. Acad. Sci. U.S.A.">
        <title>Comparative genomics of the lactic acid bacteria.</title>
        <authorList>
            <person name="Makarova K.S."/>
            <person name="Slesarev A."/>
            <person name="Wolf Y.I."/>
            <person name="Sorokin A."/>
            <person name="Mirkin B."/>
            <person name="Koonin E.V."/>
            <person name="Pavlov A."/>
            <person name="Pavlova N."/>
            <person name="Karamychev V."/>
            <person name="Polouchine N."/>
            <person name="Shakhova V."/>
            <person name="Grigoriev I."/>
            <person name="Lou Y."/>
            <person name="Rohksar D."/>
            <person name="Lucas S."/>
            <person name="Huang K."/>
            <person name="Goodstein D.M."/>
            <person name="Hawkins T."/>
            <person name="Plengvidhya V."/>
            <person name="Welker D."/>
            <person name="Hughes J."/>
            <person name="Goh Y."/>
            <person name="Benson A."/>
            <person name="Baldwin K."/>
            <person name="Lee J.-H."/>
            <person name="Diaz-Muniz I."/>
            <person name="Dosti B."/>
            <person name="Smeianov V."/>
            <person name="Wechter W."/>
            <person name="Barabote R."/>
            <person name="Lorca G."/>
            <person name="Altermann E."/>
            <person name="Barrangou R."/>
            <person name="Ganesan B."/>
            <person name="Xie Y."/>
            <person name="Rawsthorne H."/>
            <person name="Tamir D."/>
            <person name="Parker C."/>
            <person name="Breidt F."/>
            <person name="Broadbent J.R."/>
            <person name="Hutkins R."/>
            <person name="O'Sullivan D."/>
            <person name="Steele J."/>
            <person name="Unlu G."/>
            <person name="Saier M.H. Jr."/>
            <person name="Klaenhammer T."/>
            <person name="Richardson P."/>
            <person name="Kozyavkin S."/>
            <person name="Weimer B.C."/>
            <person name="Mills D.A."/>
        </authorList>
    </citation>
    <scope>NUCLEOTIDE SEQUENCE [LARGE SCALE GENOMIC DNA]</scope>
    <source>
        <strain>ATCC 25745 / CCUG 21536 / LMG 10740 / 183-1w</strain>
    </source>
</reference>
<organism>
    <name type="scientific">Pediococcus pentosaceus (strain ATCC 25745 / CCUG 21536 / LMG 10740 / 183-1w)</name>
    <dbReference type="NCBI Taxonomy" id="278197"/>
    <lineage>
        <taxon>Bacteria</taxon>
        <taxon>Bacillati</taxon>
        <taxon>Bacillota</taxon>
        <taxon>Bacilli</taxon>
        <taxon>Lactobacillales</taxon>
        <taxon>Lactobacillaceae</taxon>
        <taxon>Pediococcus</taxon>
    </lineage>
</organism>
<keyword id="KW-0456">Lyase</keyword>
<keyword id="KW-0663">Pyridoxal phosphate</keyword>